<name>HKM5_ASPHA</name>
<reference key="1">
    <citation type="submission" date="2019-04" db="EMBL/GenBank/DDBJ databases">
        <authorList>
            <person name="Gilchrist C.L.M."/>
            <person name="Chooi Y.H."/>
        </authorList>
    </citation>
    <scope>NUCLEOTIDE SEQUENCE [LARGE SCALE GENOMIC DNA]</scope>
    <source>
        <strain>FRR 3425 / CBS 142004 / DTO 360-G7</strain>
    </source>
</reference>
<reference key="2">
    <citation type="journal article" date="2021" name="Org. Biomol. Chem.">
        <title>Hancockiamides: phenylpropanoid piperazines from Aspergillus hancockii are biosynthesised by a versatile dual single-module NRPS pathway.</title>
        <authorList>
            <person name="Li H."/>
            <person name="Lacey A.E."/>
            <person name="Shu S."/>
            <person name="Kalaitzis J.A."/>
            <person name="Vuong D."/>
            <person name="Crombie A."/>
            <person name="Hu J."/>
            <person name="Gilchrist C.L.M."/>
            <person name="Lacey E."/>
            <person name="Piggott A.M."/>
            <person name="Chooi Y.H."/>
        </authorList>
    </citation>
    <scope>FUNCTION</scope>
    <scope>CATALYTIC ACTIVITY</scope>
    <scope>PATHWAY</scope>
    <scope>BIOTECHNOLOGY</scope>
</reference>
<accession>P0DUL3</accession>
<comment type="function">
    <text evidence="4 7">Cytochrome P450 monooxygenase; part of the gene cluster that mediates the biosynthesis of hancockiamides, an unusual new family of N-cinnamoylated piperazines (PubMed:33242032). The NRPS hkm10 and the NmrA-like reductase hkm9 are proposed to convert two molecules of L-Phe to the intermediary piperazine called xenocockiamide A (Probable). Xenocockiamide A is then converted to hancockiamide D via a series of hydroxylations and O-methylations (Probable). The tyrosinase hkm6 may catalyze an aromatic hydroxylation, then the 2-oxoglutarate-dependent Fe(II) dioxygenase hkm4 and the FAD-dependent phenol hydroxylase hkm7 may catalyze consecutive hydroxylations to install 2 more hydroxy groups, and the methyltransferase hkm8 probably catalyzes two methylations using 2 molecules of S-adenosyl-L-methionine (SAM) (Probable). The NRPS hkm11 activates and transfers trans-cinnamate supplied by the PAL hkm12 to hancockiamide D and produces hancockiamide A (PubMed:33242032). NRPS Hkm11 has the flexibility to tolerate the bulky hancockiamide G as a substrate and the absence of the acetyl-transferase hkm3 opens up the opportunity for hkm11 to introduce a second N-cinnamoyl moiety (PubMed:33242032). The cytochrome P450 monooxygenase hkm5 catalyzes the methylenedioxy bridge formation, converting hancockiamide A into hancockiamide G (PubMed:33242032). Hkm5 can also convert hancockiamide B into hancockiamide C, and hancockiamide D into hancockiamide H (PubMed:33242032). The N-acetyltransferase hkm3 finally transfers an acetyl group to 1-N of piperazine, converting hancockiamide A into hancockiamide B and hancockiamide G into hancockiamide C (PubMed:33242032).</text>
</comment>
<comment type="catalytic activity">
    <reaction evidence="4">
        <text>hancockiamide A + reduced [NADPH--hemoprotein reductase] + O2 = hancockiamide G + oxidized [NADPH--hemoprotein reductase] + 2 H2O + H(+)</text>
        <dbReference type="Rhea" id="RHEA:81087"/>
        <dbReference type="Rhea" id="RHEA-COMP:11964"/>
        <dbReference type="Rhea" id="RHEA-COMP:11965"/>
        <dbReference type="ChEBI" id="CHEBI:15377"/>
        <dbReference type="ChEBI" id="CHEBI:15378"/>
        <dbReference type="ChEBI" id="CHEBI:15379"/>
        <dbReference type="ChEBI" id="CHEBI:57618"/>
        <dbReference type="ChEBI" id="CHEBI:58210"/>
        <dbReference type="ChEBI" id="CHEBI:231788"/>
        <dbReference type="ChEBI" id="CHEBI:231789"/>
    </reaction>
    <physiologicalReaction direction="left-to-right" evidence="4">
        <dbReference type="Rhea" id="RHEA:81088"/>
    </physiologicalReaction>
</comment>
<comment type="catalytic activity">
    <reaction evidence="4">
        <text>hancockiamide B + reduced [NADPH--hemoprotein reductase] + O2 = hancockiamide C + oxidized [NADPH--hemoprotein reductase] + 2 H2O + H(+)</text>
        <dbReference type="Rhea" id="RHEA:81127"/>
        <dbReference type="Rhea" id="RHEA-COMP:11964"/>
        <dbReference type="Rhea" id="RHEA-COMP:11965"/>
        <dbReference type="ChEBI" id="CHEBI:15377"/>
        <dbReference type="ChEBI" id="CHEBI:15378"/>
        <dbReference type="ChEBI" id="CHEBI:15379"/>
        <dbReference type="ChEBI" id="CHEBI:57618"/>
        <dbReference type="ChEBI" id="CHEBI:58210"/>
        <dbReference type="ChEBI" id="CHEBI:221688"/>
        <dbReference type="ChEBI" id="CHEBI:221693"/>
    </reaction>
    <physiologicalReaction direction="left-to-right" evidence="4">
        <dbReference type="Rhea" id="RHEA:81128"/>
    </physiologicalReaction>
</comment>
<comment type="catalytic activity">
    <reaction evidence="4">
        <text>hancockiamide D + reduced [NADPH--hemoprotein reductase] + O2 = hancockiamide H + oxidized [NADPH--hemoprotein reductase] + 2 H2O + H(+)</text>
        <dbReference type="Rhea" id="RHEA:81131"/>
        <dbReference type="Rhea" id="RHEA-COMP:11964"/>
        <dbReference type="Rhea" id="RHEA-COMP:11965"/>
        <dbReference type="ChEBI" id="CHEBI:15377"/>
        <dbReference type="ChEBI" id="CHEBI:15378"/>
        <dbReference type="ChEBI" id="CHEBI:15379"/>
        <dbReference type="ChEBI" id="CHEBI:57618"/>
        <dbReference type="ChEBI" id="CHEBI:58210"/>
        <dbReference type="ChEBI" id="CHEBI:231787"/>
        <dbReference type="ChEBI" id="CHEBI:231794"/>
    </reaction>
    <physiologicalReaction direction="left-to-right" evidence="4">
        <dbReference type="Rhea" id="RHEA:81132"/>
    </physiologicalReaction>
</comment>
<comment type="cofactor">
    <cofactor evidence="1">
        <name>heme</name>
        <dbReference type="ChEBI" id="CHEBI:30413"/>
    </cofactor>
</comment>
<comment type="pathway">
    <text evidence="4">Secondary metabolite biosynthesis.</text>
</comment>
<comment type="subcellular location">
    <subcellularLocation>
        <location evidence="2">Membrane</location>
        <topology evidence="2">Single-pass membrane protein</topology>
    </subcellularLocation>
</comment>
<comment type="biotechnology">
    <text evidence="4">Hancockiamide D displays potent cytotoxic activity against murine myeloma NS-1 cells, suggesting a potential antitumour application (PubMed:33242032). More interestingly, hancockiamide C, the likely end metabolite of the hkm pathway, shows potent Arabidopsis thaliana seed anti-germination activity, but is inactive against the monocot Eragrostis tef seed, suggesting that it could be a herbicidal lead targeting monocots (PubMed:33242032). The herbicidal activity of hancockiamide C could be due to its phenylpropanoid-like structural features, which may act on the plant lignan pathways, and hence warrants further investigations (PubMed:33242032).</text>
</comment>
<comment type="similarity">
    <text evidence="6">Belongs to the cytochrome P450 family.</text>
</comment>
<sequence length="512" mass="58106">METPTPPLPSKDQLFPPLIQLVRALLWVLVITIGGAIVQRLFFHPLRKIPGPLTAAISGWDEFYHNIWRDGEWCKTYPKLHKEYNSPVIRIGPNHVHLNDIDAYETVFRVGTNFYKDKTFYTCADNDGSIFSLCDRDEHSERRKVLSSLFSKQAAEMTAPKVMSKLNELLDFMITQSKEGKACNITDLFRALAINWVADTLLGDCGDVVTYAETKPDLLEDIDGLSKLIPTLRFFPYLIPTLNSLAPSTSPAGVAKFKKICENYTRPRINDPIKNISQRSRASVVELLIAHRHEVYHKPPTVDYLAEEAFTFIDAGVDTTGGTLVAAIYHILRDPGILRRLREELDESQLFLSKGTPIDFKKLGNLPYLNAVINESHRIWPALPGPLPRVVPPEGLQVGSFFVPSGTILSSTHHCLHYNETVFPEPKKFKPERWLRTDKWEGDRYLNPYSRGSRACIGINLAQMELRLTLGHLFSHYDLQLCEPTLSSLEWKDHFVAHPKAPVMIHIGFRKA</sequence>
<keyword id="KW-0325">Glycoprotein</keyword>
<keyword id="KW-0349">Heme</keyword>
<keyword id="KW-0408">Iron</keyword>
<keyword id="KW-0472">Membrane</keyword>
<keyword id="KW-0479">Metal-binding</keyword>
<keyword id="KW-0503">Monooxygenase</keyword>
<keyword id="KW-0560">Oxidoreductase</keyword>
<keyword id="KW-0812">Transmembrane</keyword>
<keyword id="KW-1133">Transmembrane helix</keyword>
<dbReference type="EC" id="1.-.-.-" evidence="4"/>
<dbReference type="EMBL" id="MBFL02000005">
    <property type="protein sequence ID" value="KAF7597145.1"/>
    <property type="molecule type" value="Genomic_DNA"/>
</dbReference>
<dbReference type="SMR" id="P0DUL3"/>
<dbReference type="OrthoDB" id="3945418at2759"/>
<dbReference type="GO" id="GO:0016020">
    <property type="term" value="C:membrane"/>
    <property type="evidence" value="ECO:0007669"/>
    <property type="project" value="UniProtKB-SubCell"/>
</dbReference>
<dbReference type="GO" id="GO:0020037">
    <property type="term" value="F:heme binding"/>
    <property type="evidence" value="ECO:0007669"/>
    <property type="project" value="InterPro"/>
</dbReference>
<dbReference type="GO" id="GO:0005506">
    <property type="term" value="F:iron ion binding"/>
    <property type="evidence" value="ECO:0007669"/>
    <property type="project" value="InterPro"/>
</dbReference>
<dbReference type="GO" id="GO:0004497">
    <property type="term" value="F:monooxygenase activity"/>
    <property type="evidence" value="ECO:0007669"/>
    <property type="project" value="UniProtKB-KW"/>
</dbReference>
<dbReference type="GO" id="GO:0016705">
    <property type="term" value="F:oxidoreductase activity, acting on paired donors, with incorporation or reduction of molecular oxygen"/>
    <property type="evidence" value="ECO:0007669"/>
    <property type="project" value="InterPro"/>
</dbReference>
<dbReference type="GO" id="GO:0009058">
    <property type="term" value="P:biosynthetic process"/>
    <property type="evidence" value="ECO:0007669"/>
    <property type="project" value="UniProtKB-ARBA"/>
</dbReference>
<dbReference type="CDD" id="cd11062">
    <property type="entry name" value="CYP58-like"/>
    <property type="match status" value="1"/>
</dbReference>
<dbReference type="Gene3D" id="1.10.630.10">
    <property type="entry name" value="Cytochrome P450"/>
    <property type="match status" value="1"/>
</dbReference>
<dbReference type="InterPro" id="IPR001128">
    <property type="entry name" value="Cyt_P450"/>
</dbReference>
<dbReference type="InterPro" id="IPR002401">
    <property type="entry name" value="Cyt_P450_E_grp-I"/>
</dbReference>
<dbReference type="InterPro" id="IPR036396">
    <property type="entry name" value="Cyt_P450_sf"/>
</dbReference>
<dbReference type="InterPro" id="IPR050121">
    <property type="entry name" value="Cytochrome_P450_monoxygenase"/>
</dbReference>
<dbReference type="PANTHER" id="PTHR24305">
    <property type="entry name" value="CYTOCHROME P450"/>
    <property type="match status" value="1"/>
</dbReference>
<dbReference type="PANTHER" id="PTHR24305:SF210">
    <property type="entry name" value="CYTOCHROME P450 MONOOXYGENASE ASQL-RELATED"/>
    <property type="match status" value="1"/>
</dbReference>
<dbReference type="Pfam" id="PF00067">
    <property type="entry name" value="p450"/>
    <property type="match status" value="1"/>
</dbReference>
<dbReference type="PRINTS" id="PR00463">
    <property type="entry name" value="EP450I"/>
</dbReference>
<dbReference type="PRINTS" id="PR00385">
    <property type="entry name" value="P450"/>
</dbReference>
<dbReference type="SUPFAM" id="SSF48264">
    <property type="entry name" value="Cytochrome P450"/>
    <property type="match status" value="1"/>
</dbReference>
<evidence type="ECO:0000250" key="1">
    <source>
        <dbReference type="UniProtKB" id="P04798"/>
    </source>
</evidence>
<evidence type="ECO:0000255" key="2"/>
<evidence type="ECO:0000255" key="3">
    <source>
        <dbReference type="PROSITE-ProRule" id="PRU00498"/>
    </source>
</evidence>
<evidence type="ECO:0000269" key="4">
    <source>
    </source>
</evidence>
<evidence type="ECO:0000303" key="5">
    <source>
    </source>
</evidence>
<evidence type="ECO:0000305" key="6"/>
<evidence type="ECO:0000305" key="7">
    <source>
    </source>
</evidence>
<protein>
    <recommendedName>
        <fullName evidence="5">Cytochrome P450 monooxygenase hkm5</fullName>
        <ecNumber evidence="4">1.-.-.-</ecNumber>
    </recommendedName>
    <alternativeName>
        <fullName evidence="5">Hancockiamides biosynthesis cluster protein 5</fullName>
    </alternativeName>
</protein>
<proteinExistence type="evidence at protein level"/>
<organism>
    <name type="scientific">Aspergillus hancockii</name>
    <dbReference type="NCBI Taxonomy" id="1873369"/>
    <lineage>
        <taxon>Eukaryota</taxon>
        <taxon>Fungi</taxon>
        <taxon>Dikarya</taxon>
        <taxon>Ascomycota</taxon>
        <taxon>Pezizomycotina</taxon>
        <taxon>Eurotiomycetes</taxon>
        <taxon>Eurotiomycetidae</taxon>
        <taxon>Eurotiales</taxon>
        <taxon>Aspergillaceae</taxon>
        <taxon>Aspergillus</taxon>
        <taxon>Aspergillus subgen. Circumdati</taxon>
    </lineage>
</organism>
<feature type="chain" id="PRO_0000452932" description="Cytochrome P450 monooxygenase hkm5">
    <location>
        <begin position="1"/>
        <end position="512"/>
    </location>
</feature>
<feature type="transmembrane region" description="Helical" evidence="2">
    <location>
        <begin position="18"/>
        <end position="38"/>
    </location>
</feature>
<feature type="binding site" description="axial binding residue" evidence="1">
    <location>
        <position position="456"/>
    </location>
    <ligand>
        <name>heme</name>
        <dbReference type="ChEBI" id="CHEBI:30413"/>
    </ligand>
    <ligandPart>
        <name>Fe</name>
        <dbReference type="ChEBI" id="CHEBI:18248"/>
    </ligandPart>
</feature>
<feature type="glycosylation site" description="N-linked (GlcNAc...) asparagine" evidence="3">
    <location>
        <position position="184"/>
    </location>
</feature>
<feature type="glycosylation site" description="N-linked (GlcNAc...) asparagine" evidence="3">
    <location>
        <position position="263"/>
    </location>
</feature>
<feature type="glycosylation site" description="N-linked (GlcNAc...) asparagine" evidence="3">
    <location>
        <position position="275"/>
    </location>
</feature>
<feature type="glycosylation site" description="N-linked (GlcNAc...) asparagine" evidence="3">
    <location>
        <position position="374"/>
    </location>
</feature>
<feature type="glycosylation site" description="N-linked (GlcNAc...) asparagine" evidence="3">
    <location>
        <position position="419"/>
    </location>
</feature>